<proteinExistence type="inferred from homology"/>
<feature type="chain" id="PRO_1000127253" description="Peptidase E">
    <location>
        <begin position="1"/>
        <end position="229"/>
    </location>
</feature>
<feature type="active site" description="Charge relay system" evidence="1">
    <location>
        <position position="120"/>
    </location>
</feature>
<feature type="active site" description="Charge relay system" evidence="1">
    <location>
        <position position="135"/>
    </location>
</feature>
<feature type="active site" description="Charge relay system" evidence="1">
    <location>
        <position position="157"/>
    </location>
</feature>
<sequence length="229" mass="24783">MELLLLSNSTLPGKAWLEHALPLIANQLNGRRSAVFIPFAGVTQTWDEYTDKTAEVLAPLGINVTGIHRVADPLAAIEKAEIIIVGGGNTFQLLKESRERGLLAPMADRVKRGALYIGWSAGANLACPTIRTTNDMPIVDPNGFDALDLFPLQINPHFTNALPEGHKGETREQRIRELLVVAPELTVIGLPEGNWIQVSNGQAVLGGPNTTWVFKAGEEAVALEAGHRF</sequence>
<gene>
    <name evidence="1" type="primary">pepE</name>
    <name type="ordered locus">SeSA_A4403</name>
</gene>
<dbReference type="EC" id="3.4.13.21" evidence="1"/>
<dbReference type="EMBL" id="CP001127">
    <property type="protein sequence ID" value="ACF91046.1"/>
    <property type="molecule type" value="Genomic_DNA"/>
</dbReference>
<dbReference type="RefSeq" id="WP_000421776.1">
    <property type="nucleotide sequence ID" value="NC_011094.1"/>
</dbReference>
<dbReference type="SMR" id="B4TQM9"/>
<dbReference type="MEROPS" id="S51.001"/>
<dbReference type="KEGG" id="sew:SeSA_A4403"/>
<dbReference type="HOGENOM" id="CLU_071689_0_0_6"/>
<dbReference type="Proteomes" id="UP000001865">
    <property type="component" value="Chromosome"/>
</dbReference>
<dbReference type="GO" id="GO:0005737">
    <property type="term" value="C:cytoplasm"/>
    <property type="evidence" value="ECO:0007669"/>
    <property type="project" value="UniProtKB-SubCell"/>
</dbReference>
<dbReference type="GO" id="GO:0016805">
    <property type="term" value="F:dipeptidase activity"/>
    <property type="evidence" value="ECO:0007669"/>
    <property type="project" value="UniProtKB-UniRule"/>
</dbReference>
<dbReference type="GO" id="GO:0008236">
    <property type="term" value="F:serine-type peptidase activity"/>
    <property type="evidence" value="ECO:0007669"/>
    <property type="project" value="UniProtKB-KW"/>
</dbReference>
<dbReference type="GO" id="GO:0006508">
    <property type="term" value="P:proteolysis"/>
    <property type="evidence" value="ECO:0007669"/>
    <property type="project" value="UniProtKB-UniRule"/>
</dbReference>
<dbReference type="CDD" id="cd03146">
    <property type="entry name" value="GAT1_Peptidase_E"/>
    <property type="match status" value="1"/>
</dbReference>
<dbReference type="FunFam" id="3.40.50.880:FF:000007">
    <property type="entry name" value="Peptidase E"/>
    <property type="match status" value="1"/>
</dbReference>
<dbReference type="Gene3D" id="3.40.50.880">
    <property type="match status" value="1"/>
</dbReference>
<dbReference type="HAMAP" id="MF_00510">
    <property type="entry name" value="Peptidase_E"/>
    <property type="match status" value="1"/>
</dbReference>
<dbReference type="InterPro" id="IPR029062">
    <property type="entry name" value="Class_I_gatase-like"/>
</dbReference>
<dbReference type="InterPro" id="IPR005320">
    <property type="entry name" value="Peptidase_S51"/>
</dbReference>
<dbReference type="InterPro" id="IPR023172">
    <property type="entry name" value="Peptidase_S51_dipeptidase-E"/>
</dbReference>
<dbReference type="NCBIfam" id="NF003642">
    <property type="entry name" value="PRK05282.1"/>
    <property type="match status" value="1"/>
</dbReference>
<dbReference type="PANTHER" id="PTHR20842:SF0">
    <property type="entry name" value="ALPHA-ASPARTYL DIPEPTIDASE"/>
    <property type="match status" value="1"/>
</dbReference>
<dbReference type="PANTHER" id="PTHR20842">
    <property type="entry name" value="PROTEASE S51 ALPHA-ASPARTYL DIPEPTIDASE"/>
    <property type="match status" value="1"/>
</dbReference>
<dbReference type="Pfam" id="PF03575">
    <property type="entry name" value="Peptidase_S51"/>
    <property type="match status" value="1"/>
</dbReference>
<dbReference type="SUPFAM" id="SSF52317">
    <property type="entry name" value="Class I glutamine amidotransferase-like"/>
    <property type="match status" value="1"/>
</dbReference>
<comment type="function">
    <text evidence="1">Hydrolyzes dipeptides containing N-terminal aspartate residues. May play a role in allowing the cell to use peptide aspartate to spare carbon otherwise required for the synthesis of the aspartate family of amino acids.</text>
</comment>
<comment type="catalytic activity">
    <reaction evidence="1">
        <text>Dipeptidase E catalyzes the hydrolysis of dipeptides Asp-|-Xaa. It does not act on peptides with N-terminal Glu, Asn or Gln, nor does it cleave isoaspartyl peptides.</text>
        <dbReference type="EC" id="3.4.13.21"/>
    </reaction>
</comment>
<comment type="subcellular location">
    <subcellularLocation>
        <location evidence="1">Cytoplasm</location>
    </subcellularLocation>
</comment>
<comment type="similarity">
    <text evidence="1">Belongs to the peptidase S51 family.</text>
</comment>
<reference key="1">
    <citation type="journal article" date="2011" name="J. Bacteriol.">
        <title>Comparative genomics of 28 Salmonella enterica isolates: evidence for CRISPR-mediated adaptive sublineage evolution.</title>
        <authorList>
            <person name="Fricke W.F."/>
            <person name="Mammel M.K."/>
            <person name="McDermott P.F."/>
            <person name="Tartera C."/>
            <person name="White D.G."/>
            <person name="Leclerc J.E."/>
            <person name="Ravel J."/>
            <person name="Cebula T.A."/>
        </authorList>
    </citation>
    <scope>NUCLEOTIDE SEQUENCE [LARGE SCALE GENOMIC DNA]</scope>
    <source>
        <strain>CVM19633</strain>
    </source>
</reference>
<evidence type="ECO:0000255" key="1">
    <source>
        <dbReference type="HAMAP-Rule" id="MF_00510"/>
    </source>
</evidence>
<organism>
    <name type="scientific">Salmonella schwarzengrund (strain CVM19633)</name>
    <dbReference type="NCBI Taxonomy" id="439843"/>
    <lineage>
        <taxon>Bacteria</taxon>
        <taxon>Pseudomonadati</taxon>
        <taxon>Pseudomonadota</taxon>
        <taxon>Gammaproteobacteria</taxon>
        <taxon>Enterobacterales</taxon>
        <taxon>Enterobacteriaceae</taxon>
        <taxon>Salmonella</taxon>
    </lineage>
</organism>
<protein>
    <recommendedName>
        <fullName evidence="1">Peptidase E</fullName>
        <ecNumber evidence="1">3.4.13.21</ecNumber>
    </recommendedName>
    <alternativeName>
        <fullName evidence="1">Alpha-aspartyl dipeptidase</fullName>
    </alternativeName>
    <alternativeName>
        <fullName evidence="1">Asp-specific dipeptidase</fullName>
    </alternativeName>
    <alternativeName>
        <fullName evidence="1">Dipeptidase E</fullName>
    </alternativeName>
</protein>
<keyword id="KW-0963">Cytoplasm</keyword>
<keyword id="KW-0224">Dipeptidase</keyword>
<keyword id="KW-0378">Hydrolase</keyword>
<keyword id="KW-0645">Protease</keyword>
<keyword id="KW-0720">Serine protease</keyword>
<name>PEPE_SALSV</name>
<accession>B4TQM9</accession>